<feature type="chain" id="PRO_0000290778" description="Undecaprenyl-diphosphatase">
    <location>
        <begin position="1"/>
        <end position="312"/>
    </location>
</feature>
<feature type="transmembrane region" description="Helical" evidence="1">
    <location>
        <begin position="74"/>
        <end position="94"/>
    </location>
</feature>
<feature type="transmembrane region" description="Helical" evidence="1">
    <location>
        <begin position="122"/>
        <end position="142"/>
    </location>
</feature>
<feature type="transmembrane region" description="Helical" evidence="1">
    <location>
        <begin position="154"/>
        <end position="174"/>
    </location>
</feature>
<feature type="transmembrane region" description="Helical" evidence="1">
    <location>
        <begin position="183"/>
        <end position="203"/>
    </location>
</feature>
<feature type="transmembrane region" description="Helical" evidence="1">
    <location>
        <begin position="226"/>
        <end position="246"/>
    </location>
</feature>
<feature type="transmembrane region" description="Helical" evidence="1">
    <location>
        <begin position="254"/>
        <end position="274"/>
    </location>
</feature>
<feature type="transmembrane region" description="Helical" evidence="1">
    <location>
        <begin position="288"/>
        <end position="308"/>
    </location>
</feature>
<proteinExistence type="inferred from homology"/>
<evidence type="ECO:0000255" key="1">
    <source>
        <dbReference type="HAMAP-Rule" id="MF_01006"/>
    </source>
</evidence>
<comment type="function">
    <text evidence="1">Catalyzes the dephosphorylation of undecaprenyl diphosphate (UPP). Confers resistance to bacitracin.</text>
</comment>
<comment type="catalytic activity">
    <reaction evidence="1">
        <text>di-trans,octa-cis-undecaprenyl diphosphate + H2O = di-trans,octa-cis-undecaprenyl phosphate + phosphate + H(+)</text>
        <dbReference type="Rhea" id="RHEA:28094"/>
        <dbReference type="ChEBI" id="CHEBI:15377"/>
        <dbReference type="ChEBI" id="CHEBI:15378"/>
        <dbReference type="ChEBI" id="CHEBI:43474"/>
        <dbReference type="ChEBI" id="CHEBI:58405"/>
        <dbReference type="ChEBI" id="CHEBI:60392"/>
        <dbReference type="EC" id="3.6.1.27"/>
    </reaction>
</comment>
<comment type="subcellular location">
    <subcellularLocation>
        <location evidence="1">Cell inner membrane</location>
        <topology evidence="1">Multi-pass membrane protein</topology>
    </subcellularLocation>
</comment>
<comment type="miscellaneous">
    <text>Bacitracin is thought to be involved in the inhibition of peptidoglycan synthesis by sequestering undecaprenyl diphosphate, thereby reducing the pool of lipid carrier available.</text>
</comment>
<comment type="similarity">
    <text evidence="1">Belongs to the UppP family.</text>
</comment>
<organism>
    <name type="scientific">Trichodesmium erythraeum (strain IMS101)</name>
    <dbReference type="NCBI Taxonomy" id="203124"/>
    <lineage>
        <taxon>Bacteria</taxon>
        <taxon>Bacillati</taxon>
        <taxon>Cyanobacteriota</taxon>
        <taxon>Cyanophyceae</taxon>
        <taxon>Oscillatoriophycideae</taxon>
        <taxon>Oscillatoriales</taxon>
        <taxon>Microcoleaceae</taxon>
        <taxon>Trichodesmium</taxon>
    </lineage>
</organism>
<accession>Q10VH5</accession>
<protein>
    <recommendedName>
        <fullName evidence="1">Undecaprenyl-diphosphatase</fullName>
        <ecNumber evidence="1">3.6.1.27</ecNumber>
    </recommendedName>
    <alternativeName>
        <fullName evidence="1">Bacitracin resistance protein</fullName>
    </alternativeName>
    <alternativeName>
        <fullName evidence="1">Undecaprenyl pyrophosphate phosphatase</fullName>
    </alternativeName>
</protein>
<reference key="1">
    <citation type="journal article" date="2015" name="Proc. Natl. Acad. Sci. U.S.A.">
        <title>Trichodesmium genome maintains abundant, widespread noncoding DNA in situ, despite oligotrophic lifestyle.</title>
        <authorList>
            <person name="Walworth N."/>
            <person name="Pfreundt U."/>
            <person name="Nelson W.C."/>
            <person name="Mincer T."/>
            <person name="Heidelberg J.F."/>
            <person name="Fu F."/>
            <person name="Waterbury J.B."/>
            <person name="Glavina del Rio T."/>
            <person name="Goodwin L."/>
            <person name="Kyrpides N.C."/>
            <person name="Land M.L."/>
            <person name="Woyke T."/>
            <person name="Hutchins D.A."/>
            <person name="Hess W.R."/>
            <person name="Webb E.A."/>
        </authorList>
    </citation>
    <scope>NUCLEOTIDE SEQUENCE [LARGE SCALE GENOMIC DNA]</scope>
    <source>
        <strain>IMS101</strain>
    </source>
</reference>
<dbReference type="EC" id="3.6.1.27" evidence="1"/>
<dbReference type="EMBL" id="CP000393">
    <property type="protein sequence ID" value="ABG53749.1"/>
    <property type="molecule type" value="Genomic_DNA"/>
</dbReference>
<dbReference type="RefSeq" id="WP_011614063.1">
    <property type="nucleotide sequence ID" value="NC_008312.1"/>
</dbReference>
<dbReference type="SMR" id="Q10VH5"/>
<dbReference type="STRING" id="203124.Tery_4798"/>
<dbReference type="KEGG" id="ter:Tery_4798"/>
<dbReference type="eggNOG" id="COG1968">
    <property type="taxonomic scope" value="Bacteria"/>
</dbReference>
<dbReference type="HOGENOM" id="CLU_060296_1_0_3"/>
<dbReference type="OrthoDB" id="9808289at2"/>
<dbReference type="GO" id="GO:0005886">
    <property type="term" value="C:plasma membrane"/>
    <property type="evidence" value="ECO:0007669"/>
    <property type="project" value="UniProtKB-SubCell"/>
</dbReference>
<dbReference type="GO" id="GO:0050380">
    <property type="term" value="F:undecaprenyl-diphosphatase activity"/>
    <property type="evidence" value="ECO:0007669"/>
    <property type="project" value="UniProtKB-UniRule"/>
</dbReference>
<dbReference type="GO" id="GO:0071555">
    <property type="term" value="P:cell wall organization"/>
    <property type="evidence" value="ECO:0007669"/>
    <property type="project" value="UniProtKB-KW"/>
</dbReference>
<dbReference type="GO" id="GO:0009252">
    <property type="term" value="P:peptidoglycan biosynthetic process"/>
    <property type="evidence" value="ECO:0007669"/>
    <property type="project" value="UniProtKB-KW"/>
</dbReference>
<dbReference type="GO" id="GO:0008360">
    <property type="term" value="P:regulation of cell shape"/>
    <property type="evidence" value="ECO:0007669"/>
    <property type="project" value="UniProtKB-KW"/>
</dbReference>
<dbReference type="GO" id="GO:0046677">
    <property type="term" value="P:response to antibiotic"/>
    <property type="evidence" value="ECO:0007669"/>
    <property type="project" value="UniProtKB-UniRule"/>
</dbReference>
<dbReference type="HAMAP" id="MF_01006">
    <property type="entry name" value="Undec_diphosphatase"/>
    <property type="match status" value="1"/>
</dbReference>
<dbReference type="InterPro" id="IPR003824">
    <property type="entry name" value="UppP"/>
</dbReference>
<dbReference type="NCBIfam" id="NF001394">
    <property type="entry name" value="PRK00281.2-5"/>
    <property type="match status" value="1"/>
</dbReference>
<dbReference type="NCBIfam" id="TIGR00753">
    <property type="entry name" value="undec_PP_bacA"/>
    <property type="match status" value="1"/>
</dbReference>
<dbReference type="PANTHER" id="PTHR30622">
    <property type="entry name" value="UNDECAPRENYL-DIPHOSPHATASE"/>
    <property type="match status" value="1"/>
</dbReference>
<dbReference type="PANTHER" id="PTHR30622:SF4">
    <property type="entry name" value="UNDECAPRENYL-DIPHOSPHATASE"/>
    <property type="match status" value="1"/>
</dbReference>
<dbReference type="Pfam" id="PF02673">
    <property type="entry name" value="BacA"/>
    <property type="match status" value="1"/>
</dbReference>
<sequence length="312" mass="33897">MKFFCAFIFTALIFISLEKIGQSCCPNPIVDSEQLTIFQAVILGMVQGVTECIPVSSTAHLKIIPVALGWGDPGVAFTAVIQLGSIVSIVWYFWNDLTKITFGAYKSIITSDYQSPDLKMLVSIGLGTIPIVFFGLLIKVFIPDFDNSRLRSTVAIAIASIIMALLLVIAERIGSRKRNFEKLDIRDGIVIGLAQVLALIPGVSRSGSTITGGLFIGLERSTAARFSFLLGLPAITLAGLVELKTLLDEGFGSVGLVATLTGVFSAIIFSYIAISWLMRYLQTQDTWIFIWYRLAFGILILIGIISGVIENT</sequence>
<gene>
    <name evidence="1" type="primary">uppP</name>
    <name type="ordered locus">Tery_4798</name>
</gene>
<name>UPPP_TRIEI</name>
<keyword id="KW-0046">Antibiotic resistance</keyword>
<keyword id="KW-0997">Cell inner membrane</keyword>
<keyword id="KW-1003">Cell membrane</keyword>
<keyword id="KW-0133">Cell shape</keyword>
<keyword id="KW-0961">Cell wall biogenesis/degradation</keyword>
<keyword id="KW-0378">Hydrolase</keyword>
<keyword id="KW-0472">Membrane</keyword>
<keyword id="KW-0573">Peptidoglycan synthesis</keyword>
<keyword id="KW-0812">Transmembrane</keyword>
<keyword id="KW-1133">Transmembrane helix</keyword>